<reference key="1">
    <citation type="submission" date="2000-10" db="EMBL/GenBank/DDBJ databases">
        <title>Characterization of the mouse torsinA gene.</title>
        <authorList>
            <person name="Kuner R."/>
            <person name="Teismann P."/>
            <person name="Trutzel A."/>
            <person name="Naim J."/>
            <person name="Richter A."/>
            <person name="Bach A."/>
            <person name="Ferger B."/>
            <person name="Schneider A."/>
        </authorList>
    </citation>
    <scope>NUCLEOTIDE SEQUENCE [MRNA]</scope>
    <source>
        <tissue>Brain</tissue>
    </source>
</reference>
<reference key="2">
    <citation type="journal article" date="2004" name="Genome Res.">
        <title>The status, quality, and expansion of the NIH full-length cDNA project: the Mammalian Gene Collection (MGC).</title>
        <authorList>
            <consortium name="The MGC Project Team"/>
        </authorList>
    </citation>
    <scope>NUCLEOTIDE SEQUENCE [LARGE SCALE MRNA]</scope>
    <source>
        <strain>FVB/N</strain>
        <tissue>Kidney</tissue>
    </source>
</reference>
<reference key="3">
    <citation type="journal article" date="2005" name="Neuron">
        <title>Loss of the dystonia-associated protein torsinA selectively disrupts the neuronal nuclear envelope.</title>
        <authorList>
            <person name="Goodchild R.E."/>
            <person name="Kim C.E."/>
            <person name="Dauer W.T."/>
        </authorList>
    </citation>
    <scope>FUNCTION IN NUCLEAR ENVELOPE INTEGRITY</scope>
    <scope>DISRUPTION PHENOTYPE</scope>
    <scope>TISSUE SPECIFICITY</scope>
    <scope>DEVELOPMENTAL STAGE</scope>
    <scope>MUTAGENESIS OF GLU-304</scope>
</reference>
<reference key="4">
    <citation type="journal article" date="2007" name="Hum. Mol. Genet.">
        <title>SGCE missense mutations that cause myoclonus-dystonia syndrome impair epsilon-sarcoglycan trafficking to the plasma membrane: modulation by ubiquitination and torsinA.</title>
        <authorList>
            <person name="Esapa C.T."/>
            <person name="Waite A."/>
            <person name="Locke M."/>
            <person name="Benson M.A."/>
            <person name="Kraus M."/>
            <person name="McIlhinney R.A."/>
            <person name="Sillitoe R.V."/>
            <person name="Beesley P.W."/>
            <person name="Blake D.J."/>
        </authorList>
    </citation>
    <scope>FUNCTION IN DEGRADATION OF MISFOLDED PROTEINS</scope>
</reference>
<reference key="5">
    <citation type="journal article" date="2007" name="Proc. Natl. Acad. Sci. U.S.A.">
        <title>Mutant torsinA interferes with protein processing through the secretory pathway in DYT1 dystonia cells.</title>
        <authorList>
            <person name="Hewett J.W."/>
            <person name="Tannous B."/>
            <person name="Niland B.P."/>
            <person name="Nery F.C."/>
            <person name="Zeng J."/>
            <person name="Li Y."/>
            <person name="Breakefield X.O."/>
        </authorList>
    </citation>
    <scope>FUNCTION IN PROTEIN PROCESSING</scope>
</reference>
<reference key="6">
    <citation type="journal article" date="2008" name="J. Cell Sci.">
        <title>TorsinA binds the KASH domain of nesprins and participates in linkage between nuclear envelope and cytoskeleton.</title>
        <authorList>
            <person name="Nery F.C."/>
            <person name="Zeng J."/>
            <person name="Niland B.P."/>
            <person name="Hewett J."/>
            <person name="Farley J."/>
            <person name="Irimia D."/>
            <person name="Li Y."/>
            <person name="Wiche G."/>
            <person name="Sonnenberg A."/>
            <person name="Breakefield X.O."/>
        </authorList>
    </citation>
    <scope>FUNCTION IN NUCLEAR POLARITY</scope>
    <scope>INTERACTION WITH SYNE3; PLEC AND VIM</scope>
</reference>
<reference key="7">
    <citation type="journal article" date="2009" name="J. Biol. Chem.">
        <title>Printor, a novel torsinA-interacting protein implicated in dystonia pathogenesis.</title>
        <authorList>
            <person name="Giles L.M."/>
            <person name="Li L."/>
            <person name="Chin L.S."/>
        </authorList>
    </citation>
    <scope>INTERACTION WITH KLHL14</scope>
</reference>
<reference key="8">
    <citation type="journal article" date="2010" name="Cell">
        <title>A tissue-specific atlas of mouse protein phosphorylation and expression.</title>
        <authorList>
            <person name="Huttlin E.L."/>
            <person name="Jedrychowski M.P."/>
            <person name="Elias J.E."/>
            <person name="Goswami T."/>
            <person name="Rad R."/>
            <person name="Beausoleil S.A."/>
            <person name="Villen J."/>
            <person name="Haas W."/>
            <person name="Sowa M.E."/>
            <person name="Gygi S.P."/>
        </authorList>
    </citation>
    <scope>IDENTIFICATION BY MASS SPECTROMETRY [LARGE SCALE ANALYSIS]</scope>
    <source>
        <tissue>Kidney</tissue>
        <tissue>Liver</tissue>
        <tissue>Lung</tissue>
        <tissue>Spleen</tissue>
    </source>
</reference>
<reference key="9">
    <citation type="journal article" date="2010" name="Hum. Mol. Genet.">
        <title>Relative tissue expression of homologous torsinB correlates with the neuronal specific importance of DYT1 dystonia-associated torsinA.</title>
        <authorList>
            <person name="Jungwirth M."/>
            <person name="Dear M.L."/>
            <person name="Brown P."/>
            <person name="Holbrook K."/>
            <person name="Goodchild R."/>
        </authorList>
    </citation>
    <scope>TISSUE SPECIFICITY</scope>
    <scope>SUBCELLULAR LOCATION</scope>
    <scope>GLYCOSYLATION</scope>
    <scope>DEVELOPMENTAL STAGE</scope>
</reference>
<reference key="10">
    <citation type="journal article" date="2010" name="Proc. Natl. Acad. Sci. U.S.A.">
        <title>A molecular mechanism underlying the neural-specific defect in torsinA mutant mice.</title>
        <authorList>
            <person name="Kim C.E."/>
            <person name="Perez A."/>
            <person name="Perkins G."/>
            <person name="Ellisman M.H."/>
            <person name="Dauer W.T."/>
        </authorList>
    </citation>
    <scope>FUNCTION IN NUCLEAR ENVELOPE INTEGRITY</scope>
    <scope>INTERACTION WITH TOR1AIP1</scope>
    <scope>DISRUPTION PHENOTYPE</scope>
    <scope>DEVELOPMENTAL STAGE</scope>
    <scope>SUBCELLULAR LOCATION</scope>
</reference>
<proteinExistence type="evidence at protein level"/>
<organism>
    <name type="scientific">Mus musculus</name>
    <name type="common">Mouse</name>
    <dbReference type="NCBI Taxonomy" id="10090"/>
    <lineage>
        <taxon>Eukaryota</taxon>
        <taxon>Metazoa</taxon>
        <taxon>Chordata</taxon>
        <taxon>Craniata</taxon>
        <taxon>Vertebrata</taxon>
        <taxon>Euteleostomi</taxon>
        <taxon>Mammalia</taxon>
        <taxon>Eutheria</taxon>
        <taxon>Euarchontoglires</taxon>
        <taxon>Glires</taxon>
        <taxon>Rodentia</taxon>
        <taxon>Myomorpha</taxon>
        <taxon>Muroidea</taxon>
        <taxon>Muridae</taxon>
        <taxon>Murinae</taxon>
        <taxon>Mus</taxon>
        <taxon>Mus</taxon>
    </lineage>
</organism>
<feature type="signal peptide" evidence="1">
    <location>
        <begin position="1"/>
        <end position="20"/>
    </location>
</feature>
<feature type="chain" id="PRO_0000005508" description="Torsin-1A">
    <location>
        <begin position="21"/>
        <end position="333"/>
    </location>
</feature>
<feature type="region of interest" description="Interaction with SNAPIN" evidence="1">
    <location>
        <begin position="92"/>
        <end position="252"/>
    </location>
</feature>
<feature type="region of interest" description="Interaction with KLC1" evidence="1">
    <location>
        <begin position="252"/>
        <end position="333"/>
    </location>
</feature>
<feature type="region of interest" description="Interaction with SYNE3" evidence="1">
    <location>
        <begin position="313"/>
        <end position="333"/>
    </location>
</feature>
<feature type="binding site" evidence="3">
    <location>
        <begin position="103"/>
        <end position="110"/>
    </location>
    <ligand>
        <name>ATP</name>
        <dbReference type="ChEBI" id="CHEBI:30616"/>
    </ligand>
</feature>
<feature type="glycosylation site" description="N-linked (GlcNAc...) asparagine" evidence="1">
    <location>
        <position position="144"/>
    </location>
</feature>
<feature type="glycosylation site" description="N-linked (GlcNAc...) asparagine" evidence="1">
    <location>
        <position position="159"/>
    </location>
</feature>
<feature type="mutagenesis site" description="Nuclear envelope abnormalities specific to neurons." evidence="4">
    <location>
        <position position="304"/>
    </location>
</feature>
<evidence type="ECO:0000250" key="1"/>
<evidence type="ECO:0000250" key="2">
    <source>
        <dbReference type="UniProtKB" id="O14656"/>
    </source>
</evidence>
<evidence type="ECO:0000255" key="3"/>
<evidence type="ECO:0000269" key="4">
    <source>
    </source>
</evidence>
<evidence type="ECO:0000269" key="5">
    <source>
    </source>
</evidence>
<evidence type="ECO:0000269" key="6">
    <source>
    </source>
</evidence>
<evidence type="ECO:0000269" key="7">
    <source>
    </source>
</evidence>
<evidence type="ECO:0000269" key="8">
    <source>
    </source>
</evidence>
<evidence type="ECO:0000269" key="9">
    <source>
    </source>
</evidence>
<evidence type="ECO:0000269" key="10">
    <source>
    </source>
</evidence>
<evidence type="ECO:0000305" key="11"/>
<keyword id="KW-0002">3D-structure</keyword>
<keyword id="KW-0067">ATP-binding</keyword>
<keyword id="KW-0966">Cell projection</keyword>
<keyword id="KW-0143">Chaperone</keyword>
<keyword id="KW-0963">Cytoplasm</keyword>
<keyword id="KW-0968">Cytoplasmic vesicle</keyword>
<keyword id="KW-0206">Cytoskeleton</keyword>
<keyword id="KW-0256">Endoplasmic reticulum</keyword>
<keyword id="KW-0325">Glycoprotein</keyword>
<keyword id="KW-0378">Hydrolase</keyword>
<keyword id="KW-0472">Membrane</keyword>
<keyword id="KW-0547">Nucleotide-binding</keyword>
<keyword id="KW-0539">Nucleus</keyword>
<keyword id="KW-1185">Reference proteome</keyword>
<keyword id="KW-0732">Signal</keyword>
<keyword id="KW-0770">Synapse</keyword>
<keyword id="KW-0771">Synaptosome</keyword>
<comment type="function">
    <text evidence="4 5 6 7 10">Protein with chaperone functions important for the control of protein folding, processing, stability and localization as well as for the reduction of misfolded protein aggregates. Involved in the regulation of synaptic vesicle recycling, controls STON2 protein stability in collaboration with the COP9 signalosome complex (CSN). In the nucleus, may link the cytoskeleton with the nuclear envelope, this mechanism seems to be crucial for the control of nuclear polarity, cell movement and, specifically in neurons, nuclear envelope integrity. Participates in the cellular trafficking and may regulate the subcellular location of multipass membrane proteins such as the dopamine transporter SLC6A3, leading to the modulation of dopamine neurotransmission. In the endoplasmic reticulum, plays a role in the quality control of protein folding by increasing clearance of misfolded proteins such as SGCE variants or holding them in an intermediate state for proper refolding. May have a redundant function with TOR1B in non-neural tissues.</text>
</comment>
<comment type="catalytic activity">
    <reaction>
        <text>ATP + H2O = ADP + phosphate + H(+)</text>
        <dbReference type="Rhea" id="RHEA:13065"/>
        <dbReference type="ChEBI" id="CHEBI:15377"/>
        <dbReference type="ChEBI" id="CHEBI:15378"/>
        <dbReference type="ChEBI" id="CHEBI:30616"/>
        <dbReference type="ChEBI" id="CHEBI:43474"/>
        <dbReference type="ChEBI" id="CHEBI:456216"/>
    </reaction>
</comment>
<comment type="subunit">
    <text evidence="7 8 10">Homohexamer. Interacts with TOR1B; the interaction may be specific of neural tissues. Interacts (ATP-bound) with TOR1AIP1 and TOR1AIP2; the interactions induce ATPase activity. Interacts with KLHL14; preferentially when ATP-free. Interacts with KLC1 (via TPR repeats); the interaction associates TOR1A with the kinesin oligomeric complex. Interacts with COPS4; the interaction associates TOR1A with the CSN complex. Interacts with SNAPIN; the interaction is direct and associates SNAPIN with the CSN complex. Interacts with STON2. Interacts (ATP-bound) with SYNE3 (via KASH domain); the interaction is required for SYNE3 nuclear envelope localization. Interacts with VIM; the interaction associates TOR1A with the cytoskeleton. Interacts with PLEC. Interacts (ATP-bound) with SLC6A3; regulates SLC6A3 transport to the plasma membrane.</text>
</comment>
<comment type="subcellular location">
    <subcellularLocation>
        <location evidence="2">Endoplasmic reticulum lumen</location>
    </subcellularLocation>
    <subcellularLocation>
        <location>Nucleus membrane</location>
        <topology>Peripheral membrane protein</topology>
    </subcellularLocation>
    <subcellularLocation>
        <location>Cell projection</location>
        <location>Growth cone</location>
    </subcellularLocation>
    <subcellularLocation>
        <location evidence="1">Cytoplasmic vesicle membrane</location>
    </subcellularLocation>
    <subcellularLocation>
        <location evidence="1">Synapse</location>
        <location evidence="1">Synaptosome</location>
    </subcellularLocation>
    <subcellularLocation>
        <location evidence="1">Cytoplasm</location>
        <location evidence="1">Cytoskeleton</location>
    </subcellularLocation>
    <subcellularLocation>
        <location evidence="1">Cytoplasmic vesicle</location>
        <location evidence="1">Secretory vesicle</location>
    </subcellularLocation>
    <subcellularLocation>
        <location evidence="1">Cytoplasmic vesicle</location>
        <location evidence="1">Secretory vesicle</location>
        <location evidence="1">Synaptic vesicle</location>
    </subcellularLocation>
    <text evidence="1">Upon oxidative stress, redistributes to protusions from the cell surface (By similarity). Peripherally associated with the inner face of the ER membrane, probably mediated by the interaction with TOR1AIP1. The association with nucleus membrane is mediated by the interaction with TOR1AIP2.</text>
</comment>
<comment type="tissue specificity">
    <text evidence="4 9">Widely expressed (at protein level).</text>
</comment>
<comment type="developmental stage">
    <text evidence="4 9 10">At 16 dpc and 18 dpc, widely expressed with higher expression levels in neural tissues. In the spinal cord, expressed as early as 12 dpc until P21, the expression levels decrease in the adulthood (at protein level).</text>
</comment>
<comment type="PTM">
    <text evidence="9">N-glycosylated.</text>
</comment>
<comment type="disruption phenotype">
    <text evidence="4 10">Animals fail to feed or vocalize and die within 48 hours of birth. At 18 dpc, the global structure of the central nervous system is normal. However, at the cellular level, nuclear envelope abnormalities, with membranous vesicle-appearing structures in the perinuclear space, are observed in multiple areas of the central nervous system, including neurons of the spinal cord, pons, frontal cortex, and hippocampus.</text>
</comment>
<comment type="similarity">
    <text evidence="11">Belongs to the ClpA/ClpB family. Torsin subfamily.</text>
</comment>
<name>TOR1A_MOUSE</name>
<dbReference type="EC" id="3.6.4.-"/>
<dbReference type="EMBL" id="AJ298841">
    <property type="protein sequence ID" value="CAC12785.1"/>
    <property type="molecule type" value="mRNA"/>
</dbReference>
<dbReference type="EMBL" id="BC017683">
    <property type="protein sequence ID" value="AAH17683.1"/>
    <property type="molecule type" value="mRNA"/>
</dbReference>
<dbReference type="CCDS" id="CCDS15891.1"/>
<dbReference type="RefSeq" id="NP_659133.1">
    <property type="nucleotide sequence ID" value="NM_144884.2"/>
</dbReference>
<dbReference type="PDB" id="6FV0">
    <property type="method" value="X-ray"/>
    <property type="resolution" value="2.29 A"/>
    <property type="chains" value="A=322-333"/>
</dbReference>
<dbReference type="PDBsum" id="6FV0"/>
<dbReference type="SMR" id="Q9ER39"/>
<dbReference type="BioGRID" id="206008">
    <property type="interactions" value="2"/>
</dbReference>
<dbReference type="FunCoup" id="Q9ER39">
    <property type="interactions" value="3598"/>
</dbReference>
<dbReference type="STRING" id="10090.ENSMUSP00000028200"/>
<dbReference type="GlyCosmos" id="Q9ER39">
    <property type="glycosylation" value="2 sites, No reported glycans"/>
</dbReference>
<dbReference type="GlyGen" id="Q9ER39">
    <property type="glycosylation" value="2 sites"/>
</dbReference>
<dbReference type="iPTMnet" id="Q9ER39"/>
<dbReference type="PhosphoSitePlus" id="Q9ER39"/>
<dbReference type="jPOST" id="Q9ER39"/>
<dbReference type="PaxDb" id="10090-ENSMUSP00000028200"/>
<dbReference type="ProteomicsDB" id="258952"/>
<dbReference type="Pumba" id="Q9ER39"/>
<dbReference type="Antibodypedia" id="31437">
    <property type="antibodies" value="267 antibodies from 32 providers"/>
</dbReference>
<dbReference type="DNASU" id="30931"/>
<dbReference type="Ensembl" id="ENSMUST00000028200.9">
    <property type="protein sequence ID" value="ENSMUSP00000028200.9"/>
    <property type="gene ID" value="ENSMUSG00000026849.19"/>
</dbReference>
<dbReference type="GeneID" id="30931"/>
<dbReference type="KEGG" id="mmu:30931"/>
<dbReference type="UCSC" id="uc008jdc.2">
    <property type="organism name" value="mouse"/>
</dbReference>
<dbReference type="AGR" id="MGI:1353568"/>
<dbReference type="CTD" id="1861"/>
<dbReference type="MGI" id="MGI:1353568">
    <property type="gene designation" value="Tor1a"/>
</dbReference>
<dbReference type="VEuPathDB" id="HostDB:ENSMUSG00000026849"/>
<dbReference type="eggNOG" id="KOG2170">
    <property type="taxonomic scope" value="Eukaryota"/>
</dbReference>
<dbReference type="GeneTree" id="ENSGT00950000182888"/>
<dbReference type="HOGENOM" id="CLU_053537_0_0_1"/>
<dbReference type="InParanoid" id="Q9ER39"/>
<dbReference type="OMA" id="YTKLDYY"/>
<dbReference type="OrthoDB" id="19623at2759"/>
<dbReference type="PhylomeDB" id="Q9ER39"/>
<dbReference type="TreeFam" id="TF314941"/>
<dbReference type="Reactome" id="R-MMU-8856825">
    <property type="pathway name" value="Cargo recognition for clathrin-mediated endocytosis"/>
</dbReference>
<dbReference type="BioGRID-ORCS" id="30931">
    <property type="hits" value="2 hits in 76 CRISPR screens"/>
</dbReference>
<dbReference type="ChiTaRS" id="Tor1a">
    <property type="organism name" value="mouse"/>
</dbReference>
<dbReference type="PRO" id="PR:Q9ER39"/>
<dbReference type="Proteomes" id="UP000000589">
    <property type="component" value="Chromosome 2"/>
</dbReference>
<dbReference type="RNAct" id="Q9ER39">
    <property type="molecule type" value="protein"/>
</dbReference>
<dbReference type="Bgee" id="ENSMUSG00000026849">
    <property type="expression patterns" value="Expressed in primary oocyte and 262 other cell types or tissues"/>
</dbReference>
<dbReference type="ExpressionAtlas" id="Q9ER39">
    <property type="expression patterns" value="baseline and differential"/>
</dbReference>
<dbReference type="GO" id="GO:0005737">
    <property type="term" value="C:cytoplasm"/>
    <property type="evidence" value="ECO:0000314"/>
    <property type="project" value="MGI"/>
</dbReference>
<dbReference type="GO" id="GO:0030659">
    <property type="term" value="C:cytoplasmic vesicle membrane"/>
    <property type="evidence" value="ECO:0007669"/>
    <property type="project" value="UniProtKB-SubCell"/>
</dbReference>
<dbReference type="GO" id="GO:0005856">
    <property type="term" value="C:cytoskeleton"/>
    <property type="evidence" value="ECO:0007669"/>
    <property type="project" value="UniProtKB-SubCell"/>
</dbReference>
<dbReference type="GO" id="GO:0005783">
    <property type="term" value="C:endoplasmic reticulum"/>
    <property type="evidence" value="ECO:0000314"/>
    <property type="project" value="MGI"/>
</dbReference>
<dbReference type="GO" id="GO:0005788">
    <property type="term" value="C:endoplasmic reticulum lumen"/>
    <property type="evidence" value="ECO:0000314"/>
    <property type="project" value="MGI"/>
</dbReference>
<dbReference type="GO" id="GO:0005789">
    <property type="term" value="C:endoplasmic reticulum membrane"/>
    <property type="evidence" value="ECO:0000250"/>
    <property type="project" value="UniProtKB"/>
</dbReference>
<dbReference type="GO" id="GO:0030426">
    <property type="term" value="C:growth cone"/>
    <property type="evidence" value="ECO:0000250"/>
    <property type="project" value="UniProtKB"/>
</dbReference>
<dbReference type="GO" id="GO:0005635">
    <property type="term" value="C:nuclear envelope"/>
    <property type="evidence" value="ECO:0000314"/>
    <property type="project" value="MGI"/>
</dbReference>
<dbReference type="GO" id="GO:0031965">
    <property type="term" value="C:nuclear membrane"/>
    <property type="evidence" value="ECO:0007669"/>
    <property type="project" value="UniProtKB-SubCell"/>
</dbReference>
<dbReference type="GO" id="GO:0005634">
    <property type="term" value="C:nucleus"/>
    <property type="evidence" value="ECO:0000314"/>
    <property type="project" value="MGI"/>
</dbReference>
<dbReference type="GO" id="GO:0030141">
    <property type="term" value="C:secretory granule"/>
    <property type="evidence" value="ECO:0000250"/>
    <property type="project" value="UniProtKB"/>
</dbReference>
<dbReference type="GO" id="GO:0008021">
    <property type="term" value="C:synaptic vesicle"/>
    <property type="evidence" value="ECO:0000250"/>
    <property type="project" value="UniProtKB"/>
</dbReference>
<dbReference type="GO" id="GO:0005524">
    <property type="term" value="F:ATP binding"/>
    <property type="evidence" value="ECO:0007669"/>
    <property type="project" value="UniProtKB-KW"/>
</dbReference>
<dbReference type="GO" id="GO:0016887">
    <property type="term" value="F:ATP hydrolysis activity"/>
    <property type="evidence" value="ECO:0000250"/>
    <property type="project" value="UniProtKB"/>
</dbReference>
<dbReference type="GO" id="GO:0140662">
    <property type="term" value="F:ATP-dependent protein folding chaperone"/>
    <property type="evidence" value="ECO:0000250"/>
    <property type="project" value="UniProtKB"/>
</dbReference>
<dbReference type="GO" id="GO:0008092">
    <property type="term" value="F:cytoskeletal protein binding"/>
    <property type="evidence" value="ECO:0000353"/>
    <property type="project" value="UniProtKB"/>
</dbReference>
<dbReference type="GO" id="GO:0042802">
    <property type="term" value="F:identical protein binding"/>
    <property type="evidence" value="ECO:0000353"/>
    <property type="project" value="MGI"/>
</dbReference>
<dbReference type="GO" id="GO:0019894">
    <property type="term" value="F:kinesin binding"/>
    <property type="evidence" value="ECO:0007669"/>
    <property type="project" value="Ensembl"/>
</dbReference>
<dbReference type="GO" id="GO:0051787">
    <property type="term" value="F:misfolded protein binding"/>
    <property type="evidence" value="ECO:0000353"/>
    <property type="project" value="UniProtKB"/>
</dbReference>
<dbReference type="GO" id="GO:0007155">
    <property type="term" value="P:cell adhesion"/>
    <property type="evidence" value="ECO:0000250"/>
    <property type="project" value="UniProtKB"/>
</dbReference>
<dbReference type="GO" id="GO:0051085">
    <property type="term" value="P:chaperone cofactor-dependent protein refolding"/>
    <property type="evidence" value="ECO:0007669"/>
    <property type="project" value="InterPro"/>
</dbReference>
<dbReference type="GO" id="GO:0061077">
    <property type="term" value="P:chaperone-mediated protein folding"/>
    <property type="evidence" value="ECO:0000250"/>
    <property type="project" value="UniProtKB"/>
</dbReference>
<dbReference type="GO" id="GO:0036503">
    <property type="term" value="P:ERAD pathway"/>
    <property type="evidence" value="ECO:0000314"/>
    <property type="project" value="UniProtKB"/>
</dbReference>
<dbReference type="GO" id="GO:0045104">
    <property type="term" value="P:intermediate filament cytoskeleton organization"/>
    <property type="evidence" value="ECO:0000250"/>
    <property type="project" value="UniProtKB"/>
</dbReference>
<dbReference type="GO" id="GO:0031175">
    <property type="term" value="P:neuron projection development"/>
    <property type="evidence" value="ECO:0000250"/>
    <property type="project" value="UniProtKB"/>
</dbReference>
<dbReference type="GO" id="GO:0006998">
    <property type="term" value="P:nuclear envelope organization"/>
    <property type="evidence" value="ECO:0000315"/>
    <property type="project" value="MGI"/>
</dbReference>
<dbReference type="GO" id="GO:0071763">
    <property type="term" value="P:nuclear membrane organization"/>
    <property type="evidence" value="ECO:0000315"/>
    <property type="project" value="MGI"/>
</dbReference>
<dbReference type="GO" id="GO:0006996">
    <property type="term" value="P:organelle organization"/>
    <property type="evidence" value="ECO:0000315"/>
    <property type="project" value="UniProtKB"/>
</dbReference>
<dbReference type="GO" id="GO:1900244">
    <property type="term" value="P:positive regulation of synaptic vesicle endocytosis"/>
    <property type="evidence" value="ECO:0000250"/>
    <property type="project" value="UniProtKB"/>
</dbReference>
<dbReference type="GO" id="GO:0000338">
    <property type="term" value="P:protein deneddylation"/>
    <property type="evidence" value="ECO:0000250"/>
    <property type="project" value="UniProtKB"/>
</dbReference>
<dbReference type="GO" id="GO:0034504">
    <property type="term" value="P:protein localization to nucleus"/>
    <property type="evidence" value="ECO:0000315"/>
    <property type="project" value="UniProtKB"/>
</dbReference>
<dbReference type="GO" id="GO:0051584">
    <property type="term" value="P:regulation of dopamine uptake involved in synaptic transmission"/>
    <property type="evidence" value="ECO:0000250"/>
    <property type="project" value="UniProtKB"/>
</dbReference>
<dbReference type="GO" id="GO:2000008">
    <property type="term" value="P:regulation of protein localization to cell surface"/>
    <property type="evidence" value="ECO:0000250"/>
    <property type="project" value="UniProtKB"/>
</dbReference>
<dbReference type="GO" id="GO:0006979">
    <property type="term" value="P:response to oxidative stress"/>
    <property type="evidence" value="ECO:0007669"/>
    <property type="project" value="Ensembl"/>
</dbReference>
<dbReference type="GO" id="GO:0048499">
    <property type="term" value="P:synaptic vesicle membrane organization"/>
    <property type="evidence" value="ECO:0000250"/>
    <property type="project" value="UniProtKB"/>
</dbReference>
<dbReference type="GO" id="GO:0048489">
    <property type="term" value="P:synaptic vesicle transport"/>
    <property type="evidence" value="ECO:0000250"/>
    <property type="project" value="UniProtKB"/>
</dbReference>
<dbReference type="GO" id="GO:0044319">
    <property type="term" value="P:wound healing, spreading of cells"/>
    <property type="evidence" value="ECO:0000315"/>
    <property type="project" value="UniProtKB"/>
</dbReference>
<dbReference type="FunFam" id="3.40.50.300:FF:000743">
    <property type="entry name" value="Torsin"/>
    <property type="match status" value="1"/>
</dbReference>
<dbReference type="Gene3D" id="3.40.50.300">
    <property type="entry name" value="P-loop containing nucleotide triphosphate hydrolases"/>
    <property type="match status" value="1"/>
</dbReference>
<dbReference type="InterPro" id="IPR027417">
    <property type="entry name" value="P-loop_NTPase"/>
</dbReference>
<dbReference type="InterPro" id="IPR049337">
    <property type="entry name" value="TOR1A_C"/>
</dbReference>
<dbReference type="InterPro" id="IPR010448">
    <property type="entry name" value="Torsin"/>
</dbReference>
<dbReference type="InterPro" id="IPR017378">
    <property type="entry name" value="Torsin_1/2"/>
</dbReference>
<dbReference type="PANTHER" id="PTHR10760">
    <property type="entry name" value="TORSIN"/>
    <property type="match status" value="1"/>
</dbReference>
<dbReference type="PANTHER" id="PTHR10760:SF15">
    <property type="entry name" value="TORSIN-1A"/>
    <property type="match status" value="1"/>
</dbReference>
<dbReference type="Pfam" id="PF21376">
    <property type="entry name" value="TOR1A_C"/>
    <property type="match status" value="1"/>
</dbReference>
<dbReference type="Pfam" id="PF06309">
    <property type="entry name" value="Torsin"/>
    <property type="match status" value="1"/>
</dbReference>
<dbReference type="PIRSF" id="PIRSF038079">
    <property type="entry name" value="Torsin_2A"/>
    <property type="match status" value="1"/>
</dbReference>
<dbReference type="SUPFAM" id="SSF52540">
    <property type="entry name" value="P-loop containing nucleoside triphosphate hydrolases"/>
    <property type="match status" value="1"/>
</dbReference>
<sequence>MKLGRAALALLLLAPCVVRAVEPISLSLALAGVLTTYISYPRLYCLFAECCGQMRSLSREALQKDLDNKLFGQHLAKKVILNAVSGFLSNPKPKKPLTLSLHGWTGTGKNFASKIIAENIYEGGLNSDYVHLFVATLHFPHASNITQYKDQLQMWIRGNVSACARSIFIFDEMDKMHAGLIDAIKPFLDYYDVVDEVSYQKAIFIFLSNAGAERITDVALDFWKSGKQREEIKLRDMEPALAVSVFNNKNSGFWHSSLIDRNLIDYFVPFLPLEYKHLKMCIRVEMQSRGYEVDEDIISKVAEEMTFFPKEEKVFSDKGCKTVFTKLDYYLDD</sequence>
<protein>
    <recommendedName>
        <fullName>Torsin-1A</fullName>
    </recommendedName>
    <alternativeName>
        <fullName>Dystonia 1 protein</fullName>
    </alternativeName>
    <alternativeName>
        <fullName>Torsin ATPase 1</fullName>
        <ecNumber>3.6.4.-</ecNumber>
    </alternativeName>
    <alternativeName>
        <fullName>Torsin family 1 member A</fullName>
    </alternativeName>
</protein>
<gene>
    <name type="primary">Tor1a</name>
    <name type="synonym">Dyt1</name>
</gene>
<accession>Q9ER39</accession>